<dbReference type="EC" id="7.1.1.2"/>
<dbReference type="EMBL" id="X73927">
    <property type="protein sequence ID" value="CAA52132.1"/>
    <property type="molecule type" value="Genomic_DNA"/>
</dbReference>
<dbReference type="PIR" id="S44408">
    <property type="entry name" value="S34633"/>
</dbReference>
<dbReference type="SMR" id="P43191"/>
<dbReference type="GO" id="GO:0031966">
    <property type="term" value="C:mitochondrial membrane"/>
    <property type="evidence" value="ECO:0007669"/>
    <property type="project" value="UniProtKB-SubCell"/>
</dbReference>
<dbReference type="GO" id="GO:0008137">
    <property type="term" value="F:NADH dehydrogenase (ubiquinone) activity"/>
    <property type="evidence" value="ECO:0007669"/>
    <property type="project" value="UniProtKB-EC"/>
</dbReference>
<dbReference type="Gene3D" id="1.20.120.1200">
    <property type="entry name" value="NADH-ubiquinone/plastoquinone oxidoreductase chain 6, subunit NuoJ"/>
    <property type="match status" value="1"/>
</dbReference>
<dbReference type="InterPro" id="IPR050269">
    <property type="entry name" value="ComplexI_Subunit6"/>
</dbReference>
<dbReference type="InterPro" id="IPR001457">
    <property type="entry name" value="NADH_UbQ/plastoQ_OxRdtase_su6"/>
</dbReference>
<dbReference type="InterPro" id="IPR042106">
    <property type="entry name" value="Nuo/plastoQ_OxRdtase_6_NuoJ"/>
</dbReference>
<dbReference type="PANTHER" id="PTHR11435">
    <property type="entry name" value="NADH UBIQUINONE OXIDOREDUCTASE SUBUNIT ND6"/>
    <property type="match status" value="1"/>
</dbReference>
<dbReference type="PANTHER" id="PTHR11435:SF1">
    <property type="entry name" value="NADH-UBIQUINONE OXIDOREDUCTASE CHAIN 6"/>
    <property type="match status" value="1"/>
</dbReference>
<dbReference type="Pfam" id="PF00499">
    <property type="entry name" value="Oxidored_q3"/>
    <property type="match status" value="1"/>
</dbReference>
<sequence>MTYFVLFLGLCFVLGGLAVASNPSPYYGVVGLVLASVAGCGWLLSLGVSFVSLVLFMVYLGGMLVVFVYSVSLAADPFPEAWGDWGVVGYGVGFVVVLVVGLVVGGFVGSLDFGVVTVDSVGMFSVRLDFSGVAMFYSCGVGMFLVAGWGLLLTLFVVLELVRGLSRGAIRAV</sequence>
<reference key="1">
    <citation type="journal article" date="1994" name="Curr. Genet.">
        <title>Intragenic rearrangements in the mitochondrial NADH dehydrogenase subunit 6 gene of vertebrates.</title>
        <authorList>
            <person name="Moum T."/>
            <person name="Willassen N.P."/>
            <person name="Johansen S."/>
        </authorList>
    </citation>
    <scope>NUCLEOTIDE SEQUENCE [GENOMIC DNA]</scope>
</reference>
<name>NU6M_AETPY</name>
<organism>
    <name type="scientific">Aethia pygmaea</name>
    <name type="common">Whiskered auklet</name>
    <name type="synonym">Alca pygmaea</name>
    <dbReference type="NCBI Taxonomy" id="28687"/>
    <lineage>
        <taxon>Eukaryota</taxon>
        <taxon>Metazoa</taxon>
        <taxon>Chordata</taxon>
        <taxon>Craniata</taxon>
        <taxon>Vertebrata</taxon>
        <taxon>Euteleostomi</taxon>
        <taxon>Archelosauria</taxon>
        <taxon>Archosauria</taxon>
        <taxon>Dinosauria</taxon>
        <taxon>Saurischia</taxon>
        <taxon>Theropoda</taxon>
        <taxon>Coelurosauria</taxon>
        <taxon>Aves</taxon>
        <taxon>Neognathae</taxon>
        <taxon>Neoaves</taxon>
        <taxon>Charadriiformes</taxon>
        <taxon>Alcidae</taxon>
        <taxon>Aethia</taxon>
    </lineage>
</organism>
<proteinExistence type="inferred from homology"/>
<feature type="chain" id="PRO_0000118232" description="NADH-ubiquinone oxidoreductase chain 6">
    <location>
        <begin position="1"/>
        <end position="173"/>
    </location>
</feature>
<feature type="transmembrane region" description="Helical" evidence="2">
    <location>
        <begin position="1"/>
        <end position="21"/>
    </location>
</feature>
<feature type="transmembrane region" description="Helical" evidence="2">
    <location>
        <begin position="27"/>
        <end position="47"/>
    </location>
</feature>
<feature type="transmembrane region" description="Helical" evidence="2">
    <location>
        <begin position="48"/>
        <end position="68"/>
    </location>
</feature>
<feature type="transmembrane region" description="Helical" evidence="2">
    <location>
        <begin position="87"/>
        <end position="107"/>
    </location>
</feature>
<feature type="transmembrane region" description="Helical" evidence="2">
    <location>
        <begin position="139"/>
        <end position="159"/>
    </location>
</feature>
<protein>
    <recommendedName>
        <fullName>NADH-ubiquinone oxidoreductase chain 6</fullName>
        <ecNumber>7.1.1.2</ecNumber>
    </recommendedName>
    <alternativeName>
        <fullName>NADH dehydrogenase subunit 6</fullName>
    </alternativeName>
</protein>
<keyword id="KW-0249">Electron transport</keyword>
<keyword id="KW-0472">Membrane</keyword>
<keyword id="KW-0496">Mitochondrion</keyword>
<keyword id="KW-0520">NAD</keyword>
<keyword id="KW-0679">Respiratory chain</keyword>
<keyword id="KW-1278">Translocase</keyword>
<keyword id="KW-0812">Transmembrane</keyword>
<keyword id="KW-1133">Transmembrane helix</keyword>
<keyword id="KW-0813">Transport</keyword>
<keyword id="KW-0830">Ubiquinone</keyword>
<gene>
    <name type="primary">MT-ND6</name>
    <name type="synonym">MTND6</name>
    <name type="synonym">NADH6</name>
    <name type="synonym">ND6</name>
</gene>
<geneLocation type="mitochondrion"/>
<evidence type="ECO:0000250" key="1"/>
<evidence type="ECO:0000255" key="2"/>
<evidence type="ECO:0000305" key="3"/>
<comment type="function">
    <text evidence="1">Core subunit of the mitochondrial membrane respiratory chain NADH dehydrogenase (Complex I) that is believed to belong to the minimal assembly required for catalysis. Complex I functions in the transfer of electrons from NADH to the respiratory chain. The immediate electron acceptor for the enzyme is believed to be ubiquinone (By similarity).</text>
</comment>
<comment type="catalytic activity">
    <reaction>
        <text>a ubiquinone + NADH + 5 H(+)(in) = a ubiquinol + NAD(+) + 4 H(+)(out)</text>
        <dbReference type="Rhea" id="RHEA:29091"/>
        <dbReference type="Rhea" id="RHEA-COMP:9565"/>
        <dbReference type="Rhea" id="RHEA-COMP:9566"/>
        <dbReference type="ChEBI" id="CHEBI:15378"/>
        <dbReference type="ChEBI" id="CHEBI:16389"/>
        <dbReference type="ChEBI" id="CHEBI:17976"/>
        <dbReference type="ChEBI" id="CHEBI:57540"/>
        <dbReference type="ChEBI" id="CHEBI:57945"/>
        <dbReference type="EC" id="7.1.1.2"/>
    </reaction>
</comment>
<comment type="subcellular location">
    <subcellularLocation>
        <location evidence="3">Mitochondrion membrane</location>
        <topology evidence="3">Multi-pass membrane protein</topology>
    </subcellularLocation>
</comment>
<comment type="similarity">
    <text evidence="3">Belongs to the complex I subunit 6 family.</text>
</comment>
<accession>P43191</accession>